<organism>
    <name type="scientific">Drosophila melanogaster</name>
    <name type="common">Fruit fly</name>
    <dbReference type="NCBI Taxonomy" id="7227"/>
    <lineage>
        <taxon>Eukaryota</taxon>
        <taxon>Metazoa</taxon>
        <taxon>Ecdysozoa</taxon>
        <taxon>Arthropoda</taxon>
        <taxon>Hexapoda</taxon>
        <taxon>Insecta</taxon>
        <taxon>Pterygota</taxon>
        <taxon>Neoptera</taxon>
        <taxon>Endopterygota</taxon>
        <taxon>Diptera</taxon>
        <taxon>Brachycera</taxon>
        <taxon>Muscomorpha</taxon>
        <taxon>Ephydroidea</taxon>
        <taxon>Drosophilidae</taxon>
        <taxon>Drosophila</taxon>
        <taxon>Sophophora</taxon>
    </lineage>
</organism>
<accession>Q9VHN3</accession>
<reference key="1">
    <citation type="journal article" date="2000" name="Science">
        <title>The genome sequence of Drosophila melanogaster.</title>
        <authorList>
            <person name="Adams M.D."/>
            <person name="Celniker S.E."/>
            <person name="Holt R.A."/>
            <person name="Evans C.A."/>
            <person name="Gocayne J.D."/>
            <person name="Amanatides P.G."/>
            <person name="Scherer S.E."/>
            <person name="Li P.W."/>
            <person name="Hoskins R.A."/>
            <person name="Galle R.F."/>
            <person name="George R.A."/>
            <person name="Lewis S.E."/>
            <person name="Richards S."/>
            <person name="Ashburner M."/>
            <person name="Henderson S.N."/>
            <person name="Sutton G.G."/>
            <person name="Wortman J.R."/>
            <person name="Yandell M.D."/>
            <person name="Zhang Q."/>
            <person name="Chen L.X."/>
            <person name="Brandon R.C."/>
            <person name="Rogers Y.-H.C."/>
            <person name="Blazej R.G."/>
            <person name="Champe M."/>
            <person name="Pfeiffer B.D."/>
            <person name="Wan K.H."/>
            <person name="Doyle C."/>
            <person name="Baxter E.G."/>
            <person name="Helt G."/>
            <person name="Nelson C.R."/>
            <person name="Miklos G.L.G."/>
            <person name="Abril J.F."/>
            <person name="Agbayani A."/>
            <person name="An H.-J."/>
            <person name="Andrews-Pfannkoch C."/>
            <person name="Baldwin D."/>
            <person name="Ballew R.M."/>
            <person name="Basu A."/>
            <person name="Baxendale J."/>
            <person name="Bayraktaroglu L."/>
            <person name="Beasley E.M."/>
            <person name="Beeson K.Y."/>
            <person name="Benos P.V."/>
            <person name="Berman B.P."/>
            <person name="Bhandari D."/>
            <person name="Bolshakov S."/>
            <person name="Borkova D."/>
            <person name="Botchan M.R."/>
            <person name="Bouck J."/>
            <person name="Brokstein P."/>
            <person name="Brottier P."/>
            <person name="Burtis K.C."/>
            <person name="Busam D.A."/>
            <person name="Butler H."/>
            <person name="Cadieu E."/>
            <person name="Center A."/>
            <person name="Chandra I."/>
            <person name="Cherry J.M."/>
            <person name="Cawley S."/>
            <person name="Dahlke C."/>
            <person name="Davenport L.B."/>
            <person name="Davies P."/>
            <person name="de Pablos B."/>
            <person name="Delcher A."/>
            <person name="Deng Z."/>
            <person name="Mays A.D."/>
            <person name="Dew I."/>
            <person name="Dietz S.M."/>
            <person name="Dodson K."/>
            <person name="Doup L.E."/>
            <person name="Downes M."/>
            <person name="Dugan-Rocha S."/>
            <person name="Dunkov B.C."/>
            <person name="Dunn P."/>
            <person name="Durbin K.J."/>
            <person name="Evangelista C.C."/>
            <person name="Ferraz C."/>
            <person name="Ferriera S."/>
            <person name="Fleischmann W."/>
            <person name="Fosler C."/>
            <person name="Gabrielian A.E."/>
            <person name="Garg N.S."/>
            <person name="Gelbart W.M."/>
            <person name="Glasser K."/>
            <person name="Glodek A."/>
            <person name="Gong F."/>
            <person name="Gorrell J.H."/>
            <person name="Gu Z."/>
            <person name="Guan P."/>
            <person name="Harris M."/>
            <person name="Harris N.L."/>
            <person name="Harvey D.A."/>
            <person name="Heiman T.J."/>
            <person name="Hernandez J.R."/>
            <person name="Houck J."/>
            <person name="Hostin D."/>
            <person name="Houston K.A."/>
            <person name="Howland T.J."/>
            <person name="Wei M.-H."/>
            <person name="Ibegwam C."/>
            <person name="Jalali M."/>
            <person name="Kalush F."/>
            <person name="Karpen G.H."/>
            <person name="Ke Z."/>
            <person name="Kennison J.A."/>
            <person name="Ketchum K.A."/>
            <person name="Kimmel B.E."/>
            <person name="Kodira C.D."/>
            <person name="Kraft C.L."/>
            <person name="Kravitz S."/>
            <person name="Kulp D."/>
            <person name="Lai Z."/>
            <person name="Lasko P."/>
            <person name="Lei Y."/>
            <person name="Levitsky A.A."/>
            <person name="Li J.H."/>
            <person name="Li Z."/>
            <person name="Liang Y."/>
            <person name="Lin X."/>
            <person name="Liu X."/>
            <person name="Mattei B."/>
            <person name="McIntosh T.C."/>
            <person name="McLeod M.P."/>
            <person name="McPherson D."/>
            <person name="Merkulov G."/>
            <person name="Milshina N.V."/>
            <person name="Mobarry C."/>
            <person name="Morris J."/>
            <person name="Moshrefi A."/>
            <person name="Mount S.M."/>
            <person name="Moy M."/>
            <person name="Murphy B."/>
            <person name="Murphy L."/>
            <person name="Muzny D.M."/>
            <person name="Nelson D.L."/>
            <person name="Nelson D.R."/>
            <person name="Nelson K.A."/>
            <person name="Nixon K."/>
            <person name="Nusskern D.R."/>
            <person name="Pacleb J.M."/>
            <person name="Palazzolo M."/>
            <person name="Pittman G.S."/>
            <person name="Pan S."/>
            <person name="Pollard J."/>
            <person name="Puri V."/>
            <person name="Reese M.G."/>
            <person name="Reinert K."/>
            <person name="Remington K."/>
            <person name="Saunders R.D.C."/>
            <person name="Scheeler F."/>
            <person name="Shen H."/>
            <person name="Shue B.C."/>
            <person name="Siden-Kiamos I."/>
            <person name="Simpson M."/>
            <person name="Skupski M.P."/>
            <person name="Smith T.J."/>
            <person name="Spier E."/>
            <person name="Spradling A.C."/>
            <person name="Stapleton M."/>
            <person name="Strong R."/>
            <person name="Sun E."/>
            <person name="Svirskas R."/>
            <person name="Tector C."/>
            <person name="Turner R."/>
            <person name="Venter E."/>
            <person name="Wang A.H."/>
            <person name="Wang X."/>
            <person name="Wang Z.-Y."/>
            <person name="Wassarman D.A."/>
            <person name="Weinstock G.M."/>
            <person name="Weissenbach J."/>
            <person name="Williams S.M."/>
            <person name="Woodage T."/>
            <person name="Worley K.C."/>
            <person name="Wu D."/>
            <person name="Yang S."/>
            <person name="Yao Q.A."/>
            <person name="Ye J."/>
            <person name="Yeh R.-F."/>
            <person name="Zaveri J.S."/>
            <person name="Zhan M."/>
            <person name="Zhang G."/>
            <person name="Zhao Q."/>
            <person name="Zheng L."/>
            <person name="Zheng X.H."/>
            <person name="Zhong F.N."/>
            <person name="Zhong W."/>
            <person name="Zhou X."/>
            <person name="Zhu S.C."/>
            <person name="Zhu X."/>
            <person name="Smith H.O."/>
            <person name="Gibbs R.A."/>
            <person name="Myers E.W."/>
            <person name="Rubin G.M."/>
            <person name="Venter J.C."/>
        </authorList>
    </citation>
    <scope>NUCLEOTIDE SEQUENCE [LARGE SCALE GENOMIC DNA]</scope>
    <source>
        <strain>Berkeley</strain>
    </source>
</reference>
<reference key="2">
    <citation type="journal article" date="2002" name="Genome Biol.">
        <title>Annotation of the Drosophila melanogaster euchromatic genome: a systematic review.</title>
        <authorList>
            <person name="Misra S."/>
            <person name="Crosby M.A."/>
            <person name="Mungall C.J."/>
            <person name="Matthews B.B."/>
            <person name="Campbell K.S."/>
            <person name="Hradecky P."/>
            <person name="Huang Y."/>
            <person name="Kaminker J.S."/>
            <person name="Millburn G.H."/>
            <person name="Prochnik S.E."/>
            <person name="Smith C.D."/>
            <person name="Tupy J.L."/>
            <person name="Whitfield E.J."/>
            <person name="Bayraktaroglu L."/>
            <person name="Berman B.P."/>
            <person name="Bettencourt B.R."/>
            <person name="Celniker S.E."/>
            <person name="de Grey A.D.N.J."/>
            <person name="Drysdale R.A."/>
            <person name="Harris N.L."/>
            <person name="Richter J."/>
            <person name="Russo S."/>
            <person name="Schroeder A.J."/>
            <person name="Shu S.Q."/>
            <person name="Stapleton M."/>
            <person name="Yamada C."/>
            <person name="Ashburner M."/>
            <person name="Gelbart W.M."/>
            <person name="Rubin G.M."/>
            <person name="Lewis S.E."/>
        </authorList>
    </citation>
    <scope>GENOME REANNOTATION</scope>
    <source>
        <strain>Berkeley</strain>
    </source>
</reference>
<reference key="3">
    <citation type="submission" date="2005-08" db="EMBL/GenBank/DDBJ databases">
        <authorList>
            <person name="Stapleton M."/>
            <person name="Carlson J.W."/>
            <person name="Chavez C."/>
            <person name="Frise E."/>
            <person name="George R.A."/>
            <person name="Pacleb J.M."/>
            <person name="Park S."/>
            <person name="Wan K.H."/>
            <person name="Yu C."/>
            <person name="Celniker S.E."/>
        </authorList>
    </citation>
    <scope>NUCLEOTIDE SEQUENCE [LARGE SCALE MRNA]</scope>
    <source>
        <strain>Berkeley</strain>
    </source>
</reference>
<proteinExistence type="evidence at transcript level"/>
<sequence length="154" mass="17872">MDPDDDLVLENEAEEIERLQLPEELKKPIDPEEEDERVARIEFNCSGCEMHEMVHYFGRKPPFALGVIYPEDNYVMRDPFQPPPPRWQSKPEYYIAMGTKCSICSKTVCKDPGCSFYYTASFCLPCGKEELKNWPPEAQARIRKQMSVSQGRQT</sequence>
<keyword id="KW-1185">Reference proteome</keyword>
<dbReference type="EMBL" id="AE014297">
    <property type="protein sequence ID" value="AAF54269.1"/>
    <property type="molecule type" value="Genomic_DNA"/>
</dbReference>
<dbReference type="EMBL" id="BT023862">
    <property type="protein sequence ID" value="AAZ86783.1"/>
    <property type="molecule type" value="mRNA"/>
</dbReference>
<dbReference type="RefSeq" id="NP_001262381.1">
    <property type="nucleotide sequence ID" value="NM_001275452.1"/>
</dbReference>
<dbReference type="RefSeq" id="NP_649815.1">
    <property type="nucleotide sequence ID" value="NM_141558.2"/>
</dbReference>
<dbReference type="BioGRID" id="66206">
    <property type="interactions" value="1"/>
</dbReference>
<dbReference type="FunCoup" id="Q9VHN3">
    <property type="interactions" value="10"/>
</dbReference>
<dbReference type="IntAct" id="Q9VHN3">
    <property type="interactions" value="1"/>
</dbReference>
<dbReference type="STRING" id="7227.FBpp0307997"/>
<dbReference type="PaxDb" id="7227-FBpp0081386"/>
<dbReference type="DNASU" id="41031"/>
<dbReference type="EnsemblMetazoa" id="FBtr0081903">
    <property type="protein sequence ID" value="FBpp0081386"/>
    <property type="gene ID" value="FBgn0037611"/>
</dbReference>
<dbReference type="EnsemblMetazoa" id="FBtr0337072">
    <property type="protein sequence ID" value="FBpp0307997"/>
    <property type="gene ID" value="FBgn0037611"/>
</dbReference>
<dbReference type="GeneID" id="41031"/>
<dbReference type="KEGG" id="dme:Dmel_CG11755"/>
<dbReference type="UCSC" id="CG11755-RA">
    <property type="organism name" value="d. melanogaster"/>
</dbReference>
<dbReference type="AGR" id="FB:FBgn0037611"/>
<dbReference type="FlyBase" id="FBgn0037611">
    <property type="gene designation" value="CG11755"/>
</dbReference>
<dbReference type="VEuPathDB" id="VectorBase:FBgn0037611"/>
<dbReference type="eggNOG" id="KOG4543">
    <property type="taxonomic scope" value="Eukaryota"/>
</dbReference>
<dbReference type="GeneTree" id="ENSGT00390000007925"/>
<dbReference type="HOGENOM" id="CLU_138011_0_0_1"/>
<dbReference type="InParanoid" id="Q9VHN3"/>
<dbReference type="OMA" id="CDMHELV"/>
<dbReference type="OrthoDB" id="191995at2759"/>
<dbReference type="PhylomeDB" id="Q9VHN3"/>
<dbReference type="BioGRID-ORCS" id="41031">
    <property type="hits" value="0 hits in 1 CRISPR screen"/>
</dbReference>
<dbReference type="GenomeRNAi" id="41031"/>
<dbReference type="PRO" id="PR:Q9VHN3"/>
<dbReference type="Proteomes" id="UP000000803">
    <property type="component" value="Chromosome 3R"/>
</dbReference>
<dbReference type="Bgee" id="FBgn0037611">
    <property type="expression patterns" value="Expressed in adult enteroendocrine precursor cell in adult midgut (Drosophila) and 69 other cell types or tissues"/>
</dbReference>
<dbReference type="ExpressionAtlas" id="Q9VHN3">
    <property type="expression patterns" value="baseline and differential"/>
</dbReference>
<dbReference type="InterPro" id="IPR042426">
    <property type="entry name" value="CDPF1"/>
</dbReference>
<dbReference type="InterPro" id="IPR018785">
    <property type="entry name" value="CDPF1_dom"/>
</dbReference>
<dbReference type="PANTHER" id="PTHR31849:SF1">
    <property type="entry name" value="CYSTEINE-RICH DPF MOTIF DOMAIN-CONTAINING PROTEIN 1"/>
    <property type="match status" value="1"/>
</dbReference>
<dbReference type="PANTHER" id="PTHR31849">
    <property type="entry name" value="CYSTEINE-RICH PDF MOTIF DOMAIN-CONTAINING PROTEIN 1"/>
    <property type="match status" value="1"/>
</dbReference>
<dbReference type="Pfam" id="PF10170">
    <property type="entry name" value="C6_DPF"/>
    <property type="match status" value="1"/>
</dbReference>
<dbReference type="PRINTS" id="PR01995">
    <property type="entry name" value="UPF0595"/>
</dbReference>
<feature type="chain" id="PRO_0000341365" description="Cysteine-rich DPF motif domain-containing protein 1">
    <location>
        <begin position="1"/>
        <end position="154"/>
    </location>
</feature>
<protein>
    <recommendedName>
        <fullName>Cysteine-rich DPF motif domain-containing protein 1</fullName>
    </recommendedName>
</protein>
<comment type="similarity">
    <text evidence="1">Belongs to the CDPF1 family.</text>
</comment>
<name>CDPF1_DROME</name>
<evidence type="ECO:0000305" key="1"/>
<gene>
    <name type="ORF">CG11755</name>
</gene>